<sequence>MKCLLISLALWLGTVGTRGTEPELSETQRRSLQVALEEFHKHPPVQLAFQEIGVDRAEEVLFSAGTFVRLEFKLQQTNCPKKDWKKPECTIKPNGRRRKCLACIKMDPKGKILGRIVHCPILKQGPQDPQELQCIKIAQAGEDPHGYFLPGQFAFSRALRTK</sequence>
<dbReference type="EMBL" id="AK002298">
    <property type="protein sequence ID" value="BAB21997.1"/>
    <property type="molecule type" value="mRNA"/>
</dbReference>
<dbReference type="EMBL" id="BC038914">
    <property type="protein sequence ID" value="AAH38914.1"/>
    <property type="molecule type" value="mRNA"/>
</dbReference>
<dbReference type="CCDS" id="CCDS20105.1"/>
<dbReference type="RefSeq" id="NP_001334097.1">
    <property type="nucleotide sequence ID" value="NM_001347168.1"/>
</dbReference>
<dbReference type="RefSeq" id="NP_082128.1">
    <property type="nucleotide sequence ID" value="NM_027852.3"/>
</dbReference>
<dbReference type="SMR" id="Q9DD06"/>
<dbReference type="FunCoup" id="Q9DD06">
    <property type="interactions" value="153"/>
</dbReference>
<dbReference type="STRING" id="10090.ENSMUSP00000009425"/>
<dbReference type="PhosphoSitePlus" id="Q9DD06"/>
<dbReference type="CPTAC" id="non-CPTAC-3412"/>
<dbReference type="jPOST" id="Q9DD06"/>
<dbReference type="PaxDb" id="10090-ENSMUSP00000009425"/>
<dbReference type="PeptideAtlas" id="Q9DD06"/>
<dbReference type="ProteomicsDB" id="255103"/>
<dbReference type="Antibodypedia" id="32863">
    <property type="antibodies" value="356 antibodies from 23 providers"/>
</dbReference>
<dbReference type="DNASU" id="71660"/>
<dbReference type="Ensembl" id="ENSMUST00000204267.3">
    <property type="protein sequence ID" value="ENSMUSP00000144793.2"/>
    <property type="gene ID" value="ENSMUSG00000009281.7"/>
</dbReference>
<dbReference type="Ensembl" id="ENSMUST00000204930.3">
    <property type="protein sequence ID" value="ENSMUSP00000144799.2"/>
    <property type="gene ID" value="ENSMUSG00000009281.7"/>
</dbReference>
<dbReference type="GeneID" id="71660"/>
<dbReference type="KEGG" id="mmu:71660"/>
<dbReference type="UCSC" id="uc009but.1">
    <property type="organism name" value="mouse"/>
</dbReference>
<dbReference type="AGR" id="MGI:1918910"/>
<dbReference type="CTD" id="5919"/>
<dbReference type="MGI" id="MGI:1918910">
    <property type="gene designation" value="Rarres2"/>
</dbReference>
<dbReference type="VEuPathDB" id="HostDB:ENSMUSG00000009281"/>
<dbReference type="eggNOG" id="ENOG502SE7C">
    <property type="taxonomic scope" value="Eukaryota"/>
</dbReference>
<dbReference type="GeneTree" id="ENSGT00390000016226"/>
<dbReference type="HOGENOM" id="CLU_138029_0_0_1"/>
<dbReference type="InParanoid" id="Q9DD06"/>
<dbReference type="OrthoDB" id="9894305at2759"/>
<dbReference type="PhylomeDB" id="Q9DD06"/>
<dbReference type="TreeFam" id="TF330938"/>
<dbReference type="Reactome" id="R-MMU-114608">
    <property type="pathway name" value="Platelet degranulation"/>
</dbReference>
<dbReference type="BioGRID-ORCS" id="71660">
    <property type="hits" value="2 hits in 80 CRISPR screens"/>
</dbReference>
<dbReference type="ChiTaRS" id="Rarres2">
    <property type="organism name" value="mouse"/>
</dbReference>
<dbReference type="PRO" id="PR:Q9DD06"/>
<dbReference type="Proteomes" id="UP000000589">
    <property type="component" value="Chromosome 6"/>
</dbReference>
<dbReference type="RNAct" id="Q9DD06">
    <property type="molecule type" value="protein"/>
</dbReference>
<dbReference type="Bgee" id="ENSMUSG00000009281">
    <property type="expression patterns" value="Expressed in placenta labyrinth and 245 other cell types or tissues"/>
</dbReference>
<dbReference type="ExpressionAtlas" id="Q9DD06">
    <property type="expression patterns" value="baseline and differential"/>
</dbReference>
<dbReference type="GO" id="GO:0005576">
    <property type="term" value="C:extracellular region"/>
    <property type="evidence" value="ECO:0000314"/>
    <property type="project" value="UniProtKB"/>
</dbReference>
<dbReference type="GO" id="GO:0005615">
    <property type="term" value="C:extracellular space"/>
    <property type="evidence" value="ECO:0007005"/>
    <property type="project" value="BHF-UCL"/>
</dbReference>
<dbReference type="GO" id="GO:0005102">
    <property type="term" value="F:signaling receptor binding"/>
    <property type="evidence" value="ECO:0007669"/>
    <property type="project" value="InterPro"/>
</dbReference>
<dbReference type="GO" id="GO:0050873">
    <property type="term" value="P:brown fat cell differentiation"/>
    <property type="evidence" value="ECO:0000314"/>
    <property type="project" value="MGI"/>
</dbReference>
<dbReference type="GO" id="GO:0006935">
    <property type="term" value="P:chemotaxis"/>
    <property type="evidence" value="ECO:0007669"/>
    <property type="project" value="UniProtKB-KW"/>
</dbReference>
<dbReference type="GO" id="GO:0006954">
    <property type="term" value="P:inflammatory response"/>
    <property type="evidence" value="ECO:0007669"/>
    <property type="project" value="UniProtKB-KW"/>
</dbReference>
<dbReference type="GO" id="GO:0050921">
    <property type="term" value="P:positive regulation of chemotaxis"/>
    <property type="evidence" value="ECO:0000314"/>
    <property type="project" value="UniProtKB"/>
</dbReference>
<dbReference type="GO" id="GO:0045600">
    <property type="term" value="P:positive regulation of fat cell differentiation"/>
    <property type="evidence" value="ECO:0000315"/>
    <property type="project" value="UniProtKB"/>
</dbReference>
<dbReference type="GO" id="GO:0001934">
    <property type="term" value="P:positive regulation of protein phosphorylation"/>
    <property type="evidence" value="ECO:0000314"/>
    <property type="project" value="UniProtKB"/>
</dbReference>
<dbReference type="GO" id="GO:0046626">
    <property type="term" value="P:regulation of insulin receptor signaling pathway"/>
    <property type="evidence" value="ECO:0000314"/>
    <property type="project" value="UniProtKB"/>
</dbReference>
<dbReference type="GO" id="GO:0050994">
    <property type="term" value="P:regulation of lipid catabolic process"/>
    <property type="evidence" value="ECO:0000315"/>
    <property type="project" value="UniProtKB"/>
</dbReference>
<dbReference type="FunFam" id="3.10.450.10:FF:000014">
    <property type="entry name" value="Retinoic acid receptor responder 2"/>
    <property type="match status" value="1"/>
</dbReference>
<dbReference type="Gene3D" id="3.10.450.10">
    <property type="match status" value="1"/>
</dbReference>
<dbReference type="InterPro" id="IPR029562">
    <property type="entry name" value="Chemerin"/>
</dbReference>
<dbReference type="InterPro" id="IPR046350">
    <property type="entry name" value="Cystatin_sf"/>
</dbReference>
<dbReference type="PANTHER" id="PTHR15106">
    <property type="entry name" value="RETINOIC ACID RECEPTOR RESPONDER PROTEIN 2"/>
    <property type="match status" value="1"/>
</dbReference>
<dbReference type="PANTHER" id="PTHR15106:SF2">
    <property type="entry name" value="RETINOIC ACID RECEPTOR RESPONDER PROTEIN 2"/>
    <property type="match status" value="1"/>
</dbReference>
<dbReference type="SUPFAM" id="SSF54403">
    <property type="entry name" value="Cystatin/monellin"/>
    <property type="match status" value="1"/>
</dbReference>
<name>RARR2_MOUSE</name>
<feature type="signal peptide" evidence="2">
    <location>
        <begin position="1"/>
        <end position="20"/>
    </location>
</feature>
<feature type="chain" id="PRO_0000022530" description="Retinoic acid receptor responder protein 2">
    <location>
        <begin position="21"/>
        <end position="156"/>
    </location>
</feature>
<feature type="propeptide" id="PRO_0000424871" evidence="1">
    <location>
        <begin position="157"/>
        <end position="162"/>
    </location>
</feature>
<feature type="disulfide bond" evidence="1">
    <location>
        <begin position="79"/>
        <end position="89"/>
    </location>
</feature>
<feature type="disulfide bond" evidence="1">
    <location>
        <begin position="100"/>
        <end position="119"/>
    </location>
</feature>
<feature type="disulfide bond" evidence="3">
    <location>
        <begin position="103"/>
        <end position="134"/>
    </location>
</feature>
<feature type="sequence variant" description="In strain: FVB/N." evidence="4">
    <original>C</original>
    <variation>F</variation>
    <location>
        <position position="3"/>
    </location>
</feature>
<comment type="function">
    <text evidence="5 7">Adipocyte-secreted protein (adipokine) that regulates adipogenesis, metabolism and inflammation through activation of the chemokine-like receptor 1 (CMKLR1). Also acts as a ligand for CMKLR2. Can also bind to C-C chemokine receptor-like 2 (CCRL2), but with a lower affinity than it does to CMKLR1 or CMKLR2. Positively regulates adipocyte differentiation, modulates the expression of adipocyte genes involved in lipid and glucose metabolism and might play a role in angiogenesis, a process essential for the expansion of white adipose tissue. Also acts as a pro-inflammatory adipokine, causing an increase in secretion of pro-inflammatory and prodiabetic adipokines, which further impair adipose tissue metabolic function and have negative systemic effects including impaired insulin sensitivity, altered glucose and lipid metabolism, and a decrease in vascular function in other tissues. Can have both pro- and anti-inflammatory properties depending on the modality of enzymatic cleavage by different classes of proteases. Acts as a chemotactic factor for leukocyte populations expressing CMKLR1, particularly immature plasmacytoid dendritic cells, but also immature myeloid DCs, macrophages and natural killer cells. Exerts an anti-inflammatory role by preventing TNF/TNFA-induced VCAM1 expression and monocytes adhesion in vascular endothelial cells. The effect is mediated via inhibiting activation of NF-kappa-B and CRK/p38 through stimulation of AKT1/NOS3 signaling and nitric oxide production. Exhibits an antimicrobial function in the skin.</text>
</comment>
<comment type="subcellular location">
    <subcellularLocation>
        <location evidence="5 7">Secreted</location>
    </subcellularLocation>
</comment>
<comment type="tissue specificity">
    <text evidence="5 6 7">Expressed in the differentiated adipocytes (at protein level). Abundantly expressed in the liver, adipose tissue including visceral, epididymal, and brown adipose tissue.</text>
</comment>
<comment type="induction">
    <text evidence="7">Strongly induced during adipocyte differentiation.</text>
</comment>
<comment type="PTM">
    <text evidence="2">Secreted in an inactive precursor form, prochemerin, which is proteolytically processed by a variety of extracellular proteases to generate forms with differing levels of bioactivity. For example, the removal of six amino acids results in chemerin-156, which exhibits the highest activity, while removal of seven amino acids results in chemerin-155 which has slightly less activity. Some proteases are able to cleave at more than one site and chemerin forms may be sequentially processed by different enzymes to modulate activity levels. The coordinated expression and activity of chemerin-modifying enzymes is essential for regulating its bioactivation, inactivation and, consequently, biological function. Cathepsin G cleaves seven C-terminal amino acids from prochemerin (chemerin-155), elastase is able to cleave six (chemerin-156), eight (chemerin-154) or eleven (chemerin-151), plasmin cleaves five amino acids (chemerin-157), and tryptase cleaves five (chemerin-157) or eight (chemerin-154). Multiple cleavages might be required to fully activate chemerin, with an initial tryptase cleavage resulting in chemerin with low activity (chemerin-157), and a second cleavage by carboxypeptidase N or B producing highly active chemerin (chemerin-156) (By similarity).</text>
</comment>
<reference key="1">
    <citation type="journal article" date="2005" name="Science">
        <title>The transcriptional landscape of the mammalian genome.</title>
        <authorList>
            <person name="Carninci P."/>
            <person name="Kasukawa T."/>
            <person name="Katayama S."/>
            <person name="Gough J."/>
            <person name="Frith M.C."/>
            <person name="Maeda N."/>
            <person name="Oyama R."/>
            <person name="Ravasi T."/>
            <person name="Lenhard B."/>
            <person name="Wells C."/>
            <person name="Kodzius R."/>
            <person name="Shimokawa K."/>
            <person name="Bajic V.B."/>
            <person name="Brenner S.E."/>
            <person name="Batalov S."/>
            <person name="Forrest A.R."/>
            <person name="Zavolan M."/>
            <person name="Davis M.J."/>
            <person name="Wilming L.G."/>
            <person name="Aidinis V."/>
            <person name="Allen J.E."/>
            <person name="Ambesi-Impiombato A."/>
            <person name="Apweiler R."/>
            <person name="Aturaliya R.N."/>
            <person name="Bailey T.L."/>
            <person name="Bansal M."/>
            <person name="Baxter L."/>
            <person name="Beisel K.W."/>
            <person name="Bersano T."/>
            <person name="Bono H."/>
            <person name="Chalk A.M."/>
            <person name="Chiu K.P."/>
            <person name="Choudhary V."/>
            <person name="Christoffels A."/>
            <person name="Clutterbuck D.R."/>
            <person name="Crowe M.L."/>
            <person name="Dalla E."/>
            <person name="Dalrymple B.P."/>
            <person name="de Bono B."/>
            <person name="Della Gatta G."/>
            <person name="di Bernardo D."/>
            <person name="Down T."/>
            <person name="Engstrom P."/>
            <person name="Fagiolini M."/>
            <person name="Faulkner G."/>
            <person name="Fletcher C.F."/>
            <person name="Fukushima T."/>
            <person name="Furuno M."/>
            <person name="Futaki S."/>
            <person name="Gariboldi M."/>
            <person name="Georgii-Hemming P."/>
            <person name="Gingeras T.R."/>
            <person name="Gojobori T."/>
            <person name="Green R.E."/>
            <person name="Gustincich S."/>
            <person name="Harbers M."/>
            <person name="Hayashi Y."/>
            <person name="Hensch T.K."/>
            <person name="Hirokawa N."/>
            <person name="Hill D."/>
            <person name="Huminiecki L."/>
            <person name="Iacono M."/>
            <person name="Ikeo K."/>
            <person name="Iwama A."/>
            <person name="Ishikawa T."/>
            <person name="Jakt M."/>
            <person name="Kanapin A."/>
            <person name="Katoh M."/>
            <person name="Kawasawa Y."/>
            <person name="Kelso J."/>
            <person name="Kitamura H."/>
            <person name="Kitano H."/>
            <person name="Kollias G."/>
            <person name="Krishnan S.P."/>
            <person name="Kruger A."/>
            <person name="Kummerfeld S.K."/>
            <person name="Kurochkin I.V."/>
            <person name="Lareau L.F."/>
            <person name="Lazarevic D."/>
            <person name="Lipovich L."/>
            <person name="Liu J."/>
            <person name="Liuni S."/>
            <person name="McWilliam S."/>
            <person name="Madan Babu M."/>
            <person name="Madera M."/>
            <person name="Marchionni L."/>
            <person name="Matsuda H."/>
            <person name="Matsuzawa S."/>
            <person name="Miki H."/>
            <person name="Mignone F."/>
            <person name="Miyake S."/>
            <person name="Morris K."/>
            <person name="Mottagui-Tabar S."/>
            <person name="Mulder N."/>
            <person name="Nakano N."/>
            <person name="Nakauchi H."/>
            <person name="Ng P."/>
            <person name="Nilsson R."/>
            <person name="Nishiguchi S."/>
            <person name="Nishikawa S."/>
            <person name="Nori F."/>
            <person name="Ohara O."/>
            <person name="Okazaki Y."/>
            <person name="Orlando V."/>
            <person name="Pang K.C."/>
            <person name="Pavan W.J."/>
            <person name="Pavesi G."/>
            <person name="Pesole G."/>
            <person name="Petrovsky N."/>
            <person name="Piazza S."/>
            <person name="Reed J."/>
            <person name="Reid J.F."/>
            <person name="Ring B.Z."/>
            <person name="Ringwald M."/>
            <person name="Rost B."/>
            <person name="Ruan Y."/>
            <person name="Salzberg S.L."/>
            <person name="Sandelin A."/>
            <person name="Schneider C."/>
            <person name="Schoenbach C."/>
            <person name="Sekiguchi K."/>
            <person name="Semple C.A."/>
            <person name="Seno S."/>
            <person name="Sessa L."/>
            <person name="Sheng Y."/>
            <person name="Shibata Y."/>
            <person name="Shimada H."/>
            <person name="Shimada K."/>
            <person name="Silva D."/>
            <person name="Sinclair B."/>
            <person name="Sperling S."/>
            <person name="Stupka E."/>
            <person name="Sugiura K."/>
            <person name="Sultana R."/>
            <person name="Takenaka Y."/>
            <person name="Taki K."/>
            <person name="Tammoja K."/>
            <person name="Tan S.L."/>
            <person name="Tang S."/>
            <person name="Taylor M.S."/>
            <person name="Tegner J."/>
            <person name="Teichmann S.A."/>
            <person name="Ueda H.R."/>
            <person name="van Nimwegen E."/>
            <person name="Verardo R."/>
            <person name="Wei C.L."/>
            <person name="Yagi K."/>
            <person name="Yamanishi H."/>
            <person name="Zabarovsky E."/>
            <person name="Zhu S."/>
            <person name="Zimmer A."/>
            <person name="Hide W."/>
            <person name="Bult C."/>
            <person name="Grimmond S.M."/>
            <person name="Teasdale R.D."/>
            <person name="Liu E.T."/>
            <person name="Brusic V."/>
            <person name="Quackenbush J."/>
            <person name="Wahlestedt C."/>
            <person name="Mattick J.S."/>
            <person name="Hume D.A."/>
            <person name="Kai C."/>
            <person name="Sasaki D."/>
            <person name="Tomaru Y."/>
            <person name="Fukuda S."/>
            <person name="Kanamori-Katayama M."/>
            <person name="Suzuki M."/>
            <person name="Aoki J."/>
            <person name="Arakawa T."/>
            <person name="Iida J."/>
            <person name="Imamura K."/>
            <person name="Itoh M."/>
            <person name="Kato T."/>
            <person name="Kawaji H."/>
            <person name="Kawagashira N."/>
            <person name="Kawashima T."/>
            <person name="Kojima M."/>
            <person name="Kondo S."/>
            <person name="Konno H."/>
            <person name="Nakano K."/>
            <person name="Ninomiya N."/>
            <person name="Nishio T."/>
            <person name="Okada M."/>
            <person name="Plessy C."/>
            <person name="Shibata K."/>
            <person name="Shiraki T."/>
            <person name="Suzuki S."/>
            <person name="Tagami M."/>
            <person name="Waki K."/>
            <person name="Watahiki A."/>
            <person name="Okamura-Oho Y."/>
            <person name="Suzuki H."/>
            <person name="Kawai J."/>
            <person name="Hayashizaki Y."/>
        </authorList>
    </citation>
    <scope>NUCLEOTIDE SEQUENCE [LARGE SCALE MRNA]</scope>
    <source>
        <strain>C57BL/6J</strain>
        <tissue>Kidney</tissue>
    </source>
</reference>
<reference key="2">
    <citation type="journal article" date="2004" name="Genome Res.">
        <title>The status, quality, and expansion of the NIH full-length cDNA project: the Mammalian Gene Collection (MGC).</title>
        <authorList>
            <consortium name="The MGC Project Team"/>
        </authorList>
    </citation>
    <scope>NUCLEOTIDE SEQUENCE [LARGE SCALE MRNA]</scope>
    <scope>VARIANT PHE-3</scope>
    <source>
        <strain>FVB/N</strain>
        <tissue>Liver</tissue>
    </source>
</reference>
<reference key="3">
    <citation type="journal article" date="2007" name="Biochem. Biophys. Res. Commun.">
        <title>Chemerin--a new adipokine that modulates adipogenesis via its own receptor.</title>
        <authorList>
            <person name="Roh S.G."/>
            <person name="Song S.H."/>
            <person name="Choi K.C."/>
            <person name="Katoh K."/>
            <person name="Wittamer V."/>
            <person name="Parmentier M."/>
            <person name="Sasaki S."/>
        </authorList>
    </citation>
    <scope>TISSUE SPECIFICITY</scope>
</reference>
<reference key="4">
    <citation type="journal article" date="2007" name="J. Biol. Chem.">
        <title>Chemerin, a novel adipokine that regulates adipogenesis and adipocyte metabolism.</title>
        <authorList>
            <person name="Goralski K.B."/>
            <person name="McCarthy T.C."/>
            <person name="Hanniman E.A."/>
            <person name="Zabel B.A."/>
            <person name="Butcher E.C."/>
            <person name="Parlee S.D."/>
            <person name="Muruganandan S."/>
            <person name="Sinal C.J."/>
        </authorList>
    </citation>
    <scope>FUNCTION</scope>
    <scope>SUBCELLULAR LOCATION</scope>
    <scope>TISSUE SPECIFICITY</scope>
</reference>
<reference key="5">
    <citation type="journal article" date="2008" name="FEBS Lett.">
        <title>Chemerin enhances insulin signaling and potentiates insulin-stimulated glucose uptake in 3T3-L1 adipocytes.</title>
        <authorList>
            <person name="Takahashi M."/>
            <person name="Takahashi Y."/>
            <person name="Takahashi K."/>
            <person name="Zolotaryov F.N."/>
            <person name="Hong K.S."/>
            <person name="Kitazawa R."/>
            <person name="Iida K."/>
            <person name="Okimura Y."/>
            <person name="Kaji H."/>
            <person name="Kitazawa S."/>
            <person name="Kasuga M."/>
            <person name="Chihara K."/>
        </authorList>
    </citation>
    <scope>FUNCTION</scope>
    <scope>SUBCELLULAR LOCATION</scope>
    <scope>INDUCTION</scope>
    <scope>TISSUE SPECIFICITY</scope>
</reference>
<reference key="6">
    <citation type="journal article" date="2010" name="Cell">
        <title>A tissue-specific atlas of mouse protein phosphorylation and expression.</title>
        <authorList>
            <person name="Huttlin E.L."/>
            <person name="Jedrychowski M.P."/>
            <person name="Elias J.E."/>
            <person name="Goswami T."/>
            <person name="Rad R."/>
            <person name="Beausoleil S.A."/>
            <person name="Villen J."/>
            <person name="Haas W."/>
            <person name="Sowa M.E."/>
            <person name="Gygi S.P."/>
        </authorList>
    </citation>
    <scope>IDENTIFICATION BY MASS SPECTROMETRY [LARGE SCALE ANALYSIS]</scope>
    <source>
        <tissue>Kidney</tissue>
        <tissue>Liver</tissue>
        <tissue>Lung</tissue>
    </source>
</reference>
<evidence type="ECO:0000250" key="1"/>
<evidence type="ECO:0000250" key="2">
    <source>
        <dbReference type="UniProtKB" id="Q99969"/>
    </source>
</evidence>
<evidence type="ECO:0000255" key="3"/>
<evidence type="ECO:0000269" key="4">
    <source>
    </source>
</evidence>
<evidence type="ECO:0000269" key="5">
    <source>
    </source>
</evidence>
<evidence type="ECO:0000269" key="6">
    <source>
    </source>
</evidence>
<evidence type="ECO:0000269" key="7">
    <source>
    </source>
</evidence>
<proteinExistence type="evidence at protein level"/>
<gene>
    <name type="primary">Rarres2</name>
</gene>
<protein>
    <recommendedName>
        <fullName>Retinoic acid receptor responder protein 2</fullName>
    </recommendedName>
    <alternativeName>
        <fullName>Chemerin</fullName>
    </alternativeName>
</protein>
<keyword id="KW-0145">Chemotaxis</keyword>
<keyword id="KW-0221">Differentiation</keyword>
<keyword id="KW-1015">Disulfide bond</keyword>
<keyword id="KW-0395">Inflammatory response</keyword>
<keyword id="KW-1185">Reference proteome</keyword>
<keyword id="KW-0964">Secreted</keyword>
<keyword id="KW-0732">Signal</keyword>
<accession>Q9DD06</accession>
<accession>Q8CHU8</accession>
<organism>
    <name type="scientific">Mus musculus</name>
    <name type="common">Mouse</name>
    <dbReference type="NCBI Taxonomy" id="10090"/>
    <lineage>
        <taxon>Eukaryota</taxon>
        <taxon>Metazoa</taxon>
        <taxon>Chordata</taxon>
        <taxon>Craniata</taxon>
        <taxon>Vertebrata</taxon>
        <taxon>Euteleostomi</taxon>
        <taxon>Mammalia</taxon>
        <taxon>Eutheria</taxon>
        <taxon>Euarchontoglires</taxon>
        <taxon>Glires</taxon>
        <taxon>Rodentia</taxon>
        <taxon>Myomorpha</taxon>
        <taxon>Muroidea</taxon>
        <taxon>Muridae</taxon>
        <taxon>Murinae</taxon>
        <taxon>Mus</taxon>
        <taxon>Mus</taxon>
    </lineage>
</organism>